<comment type="function">
    <text evidence="1">Regulatory subunit of calcineurin, a calcium-dependent, calmodulin stimulated protein phosphatase. Confers calcium sensitivity (By similarity).</text>
</comment>
<comment type="subunit">
    <text>Calcineurin is composed of a catalytic subunit (A) and a regulatory subunit (B).</text>
</comment>
<comment type="similarity">
    <text evidence="4">Belongs to the calcineurin regulatory subunit family.</text>
</comment>
<name>CANB2_DICDI</name>
<accession>Q54MF3</accession>
<gene>
    <name type="primary">cnbB</name>
    <name type="ORF">DDB_G0285999</name>
</gene>
<proteinExistence type="inferred from homology"/>
<evidence type="ECO:0000250" key="1"/>
<evidence type="ECO:0000255" key="2"/>
<evidence type="ECO:0000255" key="3">
    <source>
        <dbReference type="PROSITE-ProRule" id="PRU00448"/>
    </source>
</evidence>
<evidence type="ECO:0000305" key="4"/>
<dbReference type="EMBL" id="AAFI02000083">
    <property type="protein sequence ID" value="EAL64441.1"/>
    <property type="molecule type" value="Genomic_DNA"/>
</dbReference>
<dbReference type="RefSeq" id="XP_637944.1">
    <property type="nucleotide sequence ID" value="XM_632852.1"/>
</dbReference>
<dbReference type="SMR" id="Q54MF3"/>
<dbReference type="FunCoup" id="Q54MF3">
    <property type="interactions" value="1"/>
</dbReference>
<dbReference type="STRING" id="44689.Q54MF3"/>
<dbReference type="PaxDb" id="44689-DDB0235276"/>
<dbReference type="EnsemblProtists" id="EAL64441">
    <property type="protein sequence ID" value="EAL64441"/>
    <property type="gene ID" value="DDB_G0285999"/>
</dbReference>
<dbReference type="GeneID" id="8625388"/>
<dbReference type="KEGG" id="ddi:DDB_G0285999"/>
<dbReference type="dictyBase" id="DDB_G0285999">
    <property type="gene designation" value="cnbB"/>
</dbReference>
<dbReference type="VEuPathDB" id="AmoebaDB:DDB_G0285999"/>
<dbReference type="eggNOG" id="KOG0034">
    <property type="taxonomic scope" value="Eukaryota"/>
</dbReference>
<dbReference type="HOGENOM" id="CLU_061288_10_2_1"/>
<dbReference type="InParanoid" id="Q54MF3"/>
<dbReference type="OMA" id="LKFAFRM"/>
<dbReference type="PhylomeDB" id="Q54MF3"/>
<dbReference type="PRO" id="PR:Q54MF3"/>
<dbReference type="Proteomes" id="UP000002195">
    <property type="component" value="Chromosome 4"/>
</dbReference>
<dbReference type="GO" id="GO:0005955">
    <property type="term" value="C:calcineurin complex"/>
    <property type="evidence" value="ECO:0000318"/>
    <property type="project" value="GO_Central"/>
</dbReference>
<dbReference type="GO" id="GO:0005509">
    <property type="term" value="F:calcium ion binding"/>
    <property type="evidence" value="ECO:0007669"/>
    <property type="project" value="InterPro"/>
</dbReference>
<dbReference type="GO" id="GO:0008597">
    <property type="term" value="F:calcium-dependent protein serine/threonine phosphatase regulator activity"/>
    <property type="evidence" value="ECO:0000318"/>
    <property type="project" value="GO_Central"/>
</dbReference>
<dbReference type="GO" id="GO:0019902">
    <property type="term" value="F:phosphatase binding"/>
    <property type="evidence" value="ECO:0000318"/>
    <property type="project" value="GO_Central"/>
</dbReference>
<dbReference type="GO" id="GO:0097720">
    <property type="term" value="P:calcineurin-mediated signaling"/>
    <property type="evidence" value="ECO:0000318"/>
    <property type="project" value="GO_Central"/>
</dbReference>
<dbReference type="CDD" id="cd00051">
    <property type="entry name" value="EFh"/>
    <property type="match status" value="1"/>
</dbReference>
<dbReference type="FunFam" id="1.10.238.10:FF:000951">
    <property type="entry name" value="Calcineurin subunit B type 2"/>
    <property type="match status" value="1"/>
</dbReference>
<dbReference type="Gene3D" id="1.10.238.10">
    <property type="entry name" value="EF-hand"/>
    <property type="match status" value="1"/>
</dbReference>
<dbReference type="InterPro" id="IPR011992">
    <property type="entry name" value="EF-hand-dom_pair"/>
</dbReference>
<dbReference type="InterPro" id="IPR018247">
    <property type="entry name" value="EF_Hand_1_Ca_BS"/>
</dbReference>
<dbReference type="InterPro" id="IPR002048">
    <property type="entry name" value="EF_hand_dom"/>
</dbReference>
<dbReference type="PANTHER" id="PTHR45942">
    <property type="entry name" value="PROTEIN PHOSPATASE 3 REGULATORY SUBUNIT B ALPHA ISOFORM TYPE 1"/>
    <property type="match status" value="1"/>
</dbReference>
<dbReference type="Pfam" id="PF13499">
    <property type="entry name" value="EF-hand_7"/>
    <property type="match status" value="2"/>
</dbReference>
<dbReference type="PRINTS" id="PR00450">
    <property type="entry name" value="RECOVERIN"/>
</dbReference>
<dbReference type="SMART" id="SM00054">
    <property type="entry name" value="EFh"/>
    <property type="match status" value="3"/>
</dbReference>
<dbReference type="SUPFAM" id="SSF47473">
    <property type="entry name" value="EF-hand"/>
    <property type="match status" value="1"/>
</dbReference>
<dbReference type="PROSITE" id="PS00018">
    <property type="entry name" value="EF_HAND_1"/>
    <property type="match status" value="1"/>
</dbReference>
<dbReference type="PROSITE" id="PS50222">
    <property type="entry name" value="EF_HAND_2"/>
    <property type="match status" value="4"/>
</dbReference>
<feature type="initiator methionine" description="Removed" evidence="2">
    <location>
        <position position="1"/>
    </location>
</feature>
<feature type="chain" id="PRO_0000331197" description="Calcineurin subunit B type 2">
    <location>
        <begin position="2"/>
        <end position="183"/>
    </location>
</feature>
<feature type="domain" description="EF-hand 1" evidence="3">
    <location>
        <begin position="25"/>
        <end position="60"/>
    </location>
</feature>
<feature type="domain" description="EF-hand 2" evidence="3">
    <location>
        <begin position="64"/>
        <end position="92"/>
    </location>
</feature>
<feature type="domain" description="EF-hand 3" evidence="3">
    <location>
        <begin position="94"/>
        <end position="129"/>
    </location>
</feature>
<feature type="domain" description="EF-hand 4" evidence="3">
    <location>
        <begin position="135"/>
        <end position="170"/>
    </location>
</feature>
<feature type="binding site" evidence="3">
    <location>
        <position position="107"/>
    </location>
    <ligand>
        <name>Ca(2+)</name>
        <dbReference type="ChEBI" id="CHEBI:29108"/>
    </ligand>
</feature>
<feature type="binding site" evidence="3">
    <location>
        <position position="109"/>
    </location>
    <ligand>
        <name>Ca(2+)</name>
        <dbReference type="ChEBI" id="CHEBI:29108"/>
    </ligand>
</feature>
<feature type="binding site" evidence="3">
    <location>
        <position position="111"/>
    </location>
    <ligand>
        <name>Ca(2+)</name>
        <dbReference type="ChEBI" id="CHEBI:29108"/>
    </ligand>
</feature>
<feature type="binding site" evidence="3">
    <location>
        <position position="118"/>
    </location>
    <ligand>
        <name>Ca(2+)</name>
        <dbReference type="ChEBI" id="CHEBI:29108"/>
    </ligand>
</feature>
<feature type="lipid moiety-binding region" description="N-myristoyl glycine" evidence="2">
    <location>
        <position position="2"/>
    </location>
</feature>
<keyword id="KW-0106">Calcium</keyword>
<keyword id="KW-0449">Lipoprotein</keyword>
<keyword id="KW-0479">Metal-binding</keyword>
<keyword id="KW-0519">Myristate</keyword>
<keyword id="KW-1185">Reference proteome</keyword>
<keyword id="KW-0677">Repeat</keyword>
<sequence length="183" mass="21061">MGVSRSTLRTEEIEEIREVSIFSQREIKRLYKRFKRLDKEEKGSINVEDFNQIPELSMNPMLPRIISIFDVNRDGQVNFKQFVKSLSTFHPKADKADKIKILFKVYDINNDGFITRDEIETILTMMVGSNLTKEQISSIVEETLNEADVNGKGKLDYPDFYNSIGSSGCNAENMLSISFNPFE</sequence>
<protein>
    <recommendedName>
        <fullName>Calcineurin subunit B type 2</fullName>
    </recommendedName>
    <alternativeName>
        <fullName>Calcineurin regulatory subunit 2</fullName>
    </alternativeName>
    <alternativeName>
        <fullName>Protein phosphatase 2B regulatory subunit 2</fullName>
    </alternativeName>
</protein>
<organism>
    <name type="scientific">Dictyostelium discoideum</name>
    <name type="common">Social amoeba</name>
    <dbReference type="NCBI Taxonomy" id="44689"/>
    <lineage>
        <taxon>Eukaryota</taxon>
        <taxon>Amoebozoa</taxon>
        <taxon>Evosea</taxon>
        <taxon>Eumycetozoa</taxon>
        <taxon>Dictyostelia</taxon>
        <taxon>Dictyosteliales</taxon>
        <taxon>Dictyosteliaceae</taxon>
        <taxon>Dictyostelium</taxon>
    </lineage>
</organism>
<reference key="1">
    <citation type="journal article" date="2005" name="Nature">
        <title>The genome of the social amoeba Dictyostelium discoideum.</title>
        <authorList>
            <person name="Eichinger L."/>
            <person name="Pachebat J.A."/>
            <person name="Gloeckner G."/>
            <person name="Rajandream M.A."/>
            <person name="Sucgang R."/>
            <person name="Berriman M."/>
            <person name="Song J."/>
            <person name="Olsen R."/>
            <person name="Szafranski K."/>
            <person name="Xu Q."/>
            <person name="Tunggal B."/>
            <person name="Kummerfeld S."/>
            <person name="Madera M."/>
            <person name="Konfortov B.A."/>
            <person name="Rivero F."/>
            <person name="Bankier A.T."/>
            <person name="Lehmann R."/>
            <person name="Hamlin N."/>
            <person name="Davies R."/>
            <person name="Gaudet P."/>
            <person name="Fey P."/>
            <person name="Pilcher K."/>
            <person name="Chen G."/>
            <person name="Saunders D."/>
            <person name="Sodergren E.J."/>
            <person name="Davis P."/>
            <person name="Kerhornou A."/>
            <person name="Nie X."/>
            <person name="Hall N."/>
            <person name="Anjard C."/>
            <person name="Hemphill L."/>
            <person name="Bason N."/>
            <person name="Farbrother P."/>
            <person name="Desany B."/>
            <person name="Just E."/>
            <person name="Morio T."/>
            <person name="Rost R."/>
            <person name="Churcher C.M."/>
            <person name="Cooper J."/>
            <person name="Haydock S."/>
            <person name="van Driessche N."/>
            <person name="Cronin A."/>
            <person name="Goodhead I."/>
            <person name="Muzny D.M."/>
            <person name="Mourier T."/>
            <person name="Pain A."/>
            <person name="Lu M."/>
            <person name="Harper D."/>
            <person name="Lindsay R."/>
            <person name="Hauser H."/>
            <person name="James K.D."/>
            <person name="Quiles M."/>
            <person name="Madan Babu M."/>
            <person name="Saito T."/>
            <person name="Buchrieser C."/>
            <person name="Wardroper A."/>
            <person name="Felder M."/>
            <person name="Thangavelu M."/>
            <person name="Johnson D."/>
            <person name="Knights A."/>
            <person name="Loulseged H."/>
            <person name="Mungall K.L."/>
            <person name="Oliver K."/>
            <person name="Price C."/>
            <person name="Quail M.A."/>
            <person name="Urushihara H."/>
            <person name="Hernandez J."/>
            <person name="Rabbinowitsch E."/>
            <person name="Steffen D."/>
            <person name="Sanders M."/>
            <person name="Ma J."/>
            <person name="Kohara Y."/>
            <person name="Sharp S."/>
            <person name="Simmonds M.N."/>
            <person name="Spiegler S."/>
            <person name="Tivey A."/>
            <person name="Sugano S."/>
            <person name="White B."/>
            <person name="Walker D."/>
            <person name="Woodward J.R."/>
            <person name="Winckler T."/>
            <person name="Tanaka Y."/>
            <person name="Shaulsky G."/>
            <person name="Schleicher M."/>
            <person name="Weinstock G.M."/>
            <person name="Rosenthal A."/>
            <person name="Cox E.C."/>
            <person name="Chisholm R.L."/>
            <person name="Gibbs R.A."/>
            <person name="Loomis W.F."/>
            <person name="Platzer M."/>
            <person name="Kay R.R."/>
            <person name="Williams J.G."/>
            <person name="Dear P.H."/>
            <person name="Noegel A.A."/>
            <person name="Barrell B.G."/>
            <person name="Kuspa A."/>
        </authorList>
    </citation>
    <scope>NUCLEOTIDE SEQUENCE [LARGE SCALE GENOMIC DNA]</scope>
    <source>
        <strain>AX4</strain>
    </source>
</reference>